<organism>
    <name type="scientific">Homo sapiens</name>
    <name type="common">Human</name>
    <dbReference type="NCBI Taxonomy" id="9606"/>
    <lineage>
        <taxon>Eukaryota</taxon>
        <taxon>Metazoa</taxon>
        <taxon>Chordata</taxon>
        <taxon>Craniata</taxon>
        <taxon>Vertebrata</taxon>
        <taxon>Euteleostomi</taxon>
        <taxon>Mammalia</taxon>
        <taxon>Eutheria</taxon>
        <taxon>Euarchontoglires</taxon>
        <taxon>Primates</taxon>
        <taxon>Haplorrhini</taxon>
        <taxon>Catarrhini</taxon>
        <taxon>Hominidae</taxon>
        <taxon>Homo</taxon>
    </lineage>
</organism>
<comment type="function">
    <text evidence="4 5 8 10">Scaffolding protein that specifically recognizes and binds dimethylarginine-containing proteins (PubMed:15955813). Plays a role in the regulation of translation of target mRNAs by binding Arg/Gly-rich motifs (GAR) in dimethylarginine-containing proteins. In nucleus, acts as a coactivator: recognizes and binds asymmetric dimethylation on the core histone tails associated with transcriptional activation (H3R17me2a and H4R3me2a) and recruits proteins at these arginine-methylated loci (PubMed:21172665). In cytoplasm, acts as an antiviral factor that participates in the assembly of stress granules together with G3BP1 (PubMed:35085371).</text>
</comment>
<comment type="subunit">
    <text evidence="4 5 6 7 9">Component of mRNA stress granules. Interacts with FMR1, FXR1, FXR2, EWSR1, FUS, SERBP1, EEF1A1 and DDX3X or DDX3Y, and with the small nuclear ribonucleoprotein-associated proteins SNRPB and SNRPN. Interacts with 'Lys-48'-linked tetra-ubiquitin, but not with monoubiquitin or 'Lys-63'-linked ubiquitin chains. May interact with the exon junction complex (EJC) composed at least of CASC3, EIF4A3, MAGOH and RBM8A. Interacts with POLR2A (via the C-terminal domain (CTD)).</text>
</comment>
<comment type="interaction">
    <interactant intactId="EBI-3938232">
        <id>Q9H7E2</id>
    </interactant>
    <interactant intactId="EBI-295301">
        <id>P24928</id>
        <label>POLR2A</label>
    </interactant>
    <organismsDiffer>false</organismsDiffer>
    <experiments>6</experiments>
</comment>
<comment type="interaction">
    <interactant intactId="EBI-10969939">
        <id>Q9H7E2-3</id>
    </interactant>
    <interactant intactId="EBI-373403">
        <id>O95985</id>
        <label>TOP3B</label>
    </interactant>
    <organismsDiffer>false</organismsDiffer>
    <experiments>4</experiments>
</comment>
<comment type="subcellular location">
    <subcellularLocation>
        <location evidence="5">Cytoplasm</location>
    </subcellularLocation>
    <subcellularLocation>
        <location evidence="8">Nucleus</location>
    </subcellularLocation>
    <text evidence="6 10">Predominantly cytoplasmic. Associated with actively translating polyribosomes. Component of stress granules (PubMed:18664458, PubMed:35085371).</text>
</comment>
<comment type="alternative products">
    <event type="alternative splicing"/>
    <isoform>
        <id>Q9H7E2-1</id>
        <name>1</name>
        <sequence type="displayed"/>
    </isoform>
    <isoform>
        <id>Q9H7E2-2</id>
        <name>2</name>
        <name>Long</name>
        <sequence type="described" ref="VSP_037053"/>
    </isoform>
    <isoform>
        <id>Q9H7E2-3</id>
        <name>3</name>
        <sequence type="described" ref="VSP_037052"/>
    </isoform>
</comment>
<comment type="tissue specificity">
    <text evidence="6">Detected in heart, brain, placenta, lung, liver, skeletal muscle, kidney and pancreas.</text>
</comment>
<comment type="domain">
    <text evidence="8">The Tudor domain specifically recognizes and binds asymmetric dimethylation of histone H3 'Arg-17' (H3R17me2a) and histones H4 'Arg-3', 2 tags for epigenetic transcriptional activation.</text>
</comment>
<comment type="PTM">
    <text evidence="10">Probably cleaved by enteroviral 2A proteinase.</text>
</comment>
<gene>
    <name type="primary">TDRD3</name>
</gene>
<dbReference type="EMBL" id="EU643838">
    <property type="protein sequence ID" value="ACC94142.1"/>
    <property type="molecule type" value="mRNA"/>
</dbReference>
<dbReference type="EMBL" id="AK024660">
    <property type="protein sequence ID" value="BAB14950.1"/>
    <property type="molecule type" value="mRNA"/>
</dbReference>
<dbReference type="EMBL" id="BX537910">
    <property type="protein sequence ID" value="CAD97894.1"/>
    <property type="molecule type" value="mRNA"/>
</dbReference>
<dbReference type="EMBL" id="AL354764">
    <property type="status" value="NOT_ANNOTATED_CDS"/>
    <property type="molecule type" value="Genomic_DNA"/>
</dbReference>
<dbReference type="EMBL" id="AL512666">
    <property type="status" value="NOT_ANNOTATED_CDS"/>
    <property type="molecule type" value="Genomic_DNA"/>
</dbReference>
<dbReference type="EMBL" id="CH471124">
    <property type="protein sequence ID" value="EAW52079.1"/>
    <property type="molecule type" value="Genomic_DNA"/>
</dbReference>
<dbReference type="EMBL" id="BC030514">
    <property type="protein sequence ID" value="AAH30514.1"/>
    <property type="molecule type" value="mRNA"/>
</dbReference>
<dbReference type="EMBL" id="BC060876">
    <property type="protein sequence ID" value="AAH60876.1"/>
    <property type="molecule type" value="mRNA"/>
</dbReference>
<dbReference type="CCDS" id="CCDS53872.1">
    <molecule id="Q9H7E2-3"/>
</dbReference>
<dbReference type="CCDS" id="CCDS9441.1">
    <molecule id="Q9H7E2-1"/>
</dbReference>
<dbReference type="RefSeq" id="NP_001139542.1">
    <molecule id="Q9H7E2-3"/>
    <property type="nucleotide sequence ID" value="NM_001146070.2"/>
</dbReference>
<dbReference type="RefSeq" id="NP_001139543.1">
    <molecule id="Q9H7E2-1"/>
    <property type="nucleotide sequence ID" value="NM_001146071.1"/>
</dbReference>
<dbReference type="RefSeq" id="NP_110421.1">
    <molecule id="Q9H7E2-1"/>
    <property type="nucleotide sequence ID" value="NM_030794.2"/>
</dbReference>
<dbReference type="RefSeq" id="XP_016876266.1">
    <property type="nucleotide sequence ID" value="XM_017020777.1"/>
</dbReference>
<dbReference type="PDB" id="1WJI">
    <property type="method" value="NMR"/>
    <property type="chains" value="A=194-243"/>
</dbReference>
<dbReference type="PDB" id="2LTO">
    <property type="method" value="NMR"/>
    <property type="chains" value="A=554-608"/>
</dbReference>
<dbReference type="PDB" id="3PMT">
    <property type="method" value="X-ray"/>
    <property type="resolution" value="1.80 A"/>
    <property type="chains" value="A=553-611"/>
</dbReference>
<dbReference type="PDB" id="3PNW">
    <property type="method" value="X-ray"/>
    <property type="resolution" value="2.05 A"/>
    <property type="chains" value="C/F/I/L/O/R/U/X=540-615"/>
</dbReference>
<dbReference type="PDB" id="3S6W">
    <property type="method" value="X-ray"/>
    <property type="resolution" value="1.78 A"/>
    <property type="chains" value="A=555-608"/>
</dbReference>
<dbReference type="PDB" id="5GVD">
    <property type="method" value="X-ray"/>
    <property type="resolution" value="1.62 A"/>
    <property type="chains" value="A/B=1-68"/>
</dbReference>
<dbReference type="PDB" id="5GVE">
    <property type="method" value="X-ray"/>
    <property type="resolution" value="3.61 A"/>
    <property type="chains" value="B=1-68"/>
</dbReference>
<dbReference type="PDB" id="5YJ8">
    <property type="method" value="X-ray"/>
    <property type="resolution" value="1.76 A"/>
    <property type="chains" value="A=555-608"/>
</dbReference>
<dbReference type="PDB" id="6V9T">
    <property type="method" value="X-ray"/>
    <property type="resolution" value="2.15 A"/>
    <property type="chains" value="AAA/BBB=554-611"/>
</dbReference>
<dbReference type="PDB" id="8JTN">
    <property type="method" value="X-ray"/>
    <property type="resolution" value="1.80 A"/>
    <property type="chains" value="A=554-610"/>
</dbReference>
<dbReference type="PDB" id="9C9W">
    <property type="method" value="EM"/>
    <property type="resolution" value="4.25 A"/>
    <property type="chains" value="B/D=1-68"/>
</dbReference>
<dbReference type="PDB" id="9C9Y">
    <property type="method" value="EM"/>
    <property type="resolution" value="3.35 A"/>
    <property type="chains" value="B=1-68"/>
</dbReference>
<dbReference type="PDB" id="9CA0">
    <property type="method" value="EM"/>
    <property type="resolution" value="3.48 A"/>
    <property type="chains" value="B=1-68"/>
</dbReference>
<dbReference type="PDB" id="9CA1">
    <property type="method" value="EM"/>
    <property type="resolution" value="3.26 A"/>
    <property type="chains" value="B=1-68"/>
</dbReference>
<dbReference type="PDB" id="9CA4">
    <property type="method" value="EM"/>
    <property type="resolution" value="3.01 A"/>
    <property type="chains" value="B=1-68"/>
</dbReference>
<dbReference type="PDB" id="9CAG">
    <property type="method" value="EM"/>
    <property type="resolution" value="3.33 A"/>
    <property type="chains" value="B=1-68"/>
</dbReference>
<dbReference type="PDB" id="9CAH">
    <property type="method" value="EM"/>
    <property type="resolution" value="3.16 A"/>
    <property type="chains" value="B=1-96"/>
</dbReference>
<dbReference type="PDB" id="9CAJ">
    <property type="method" value="EM"/>
    <property type="resolution" value="3.51 A"/>
    <property type="chains" value="B=1-68"/>
</dbReference>
<dbReference type="PDB" id="9CAK">
    <property type="method" value="EM"/>
    <property type="resolution" value="3.01 A"/>
    <property type="chains" value="B=1-68"/>
</dbReference>
<dbReference type="PDB" id="9CAL">
    <property type="method" value="EM"/>
    <property type="resolution" value="3.15 A"/>
    <property type="chains" value="B=1-68"/>
</dbReference>
<dbReference type="PDBsum" id="1WJI"/>
<dbReference type="PDBsum" id="2LTO"/>
<dbReference type="PDBsum" id="3PMT"/>
<dbReference type="PDBsum" id="3PNW"/>
<dbReference type="PDBsum" id="3S6W"/>
<dbReference type="PDBsum" id="5GVD"/>
<dbReference type="PDBsum" id="5GVE"/>
<dbReference type="PDBsum" id="5YJ8"/>
<dbReference type="PDBsum" id="6V9T"/>
<dbReference type="PDBsum" id="8JTN"/>
<dbReference type="PDBsum" id="9C9W"/>
<dbReference type="PDBsum" id="9C9Y"/>
<dbReference type="PDBsum" id="9CA0"/>
<dbReference type="PDBsum" id="9CA1"/>
<dbReference type="PDBsum" id="9CA4"/>
<dbReference type="PDBsum" id="9CAG"/>
<dbReference type="PDBsum" id="9CAH"/>
<dbReference type="PDBsum" id="9CAJ"/>
<dbReference type="PDBsum" id="9CAK"/>
<dbReference type="PDBsum" id="9CAL"/>
<dbReference type="BMRB" id="Q9H7E2"/>
<dbReference type="EMDB" id="EMD-45374"/>
<dbReference type="EMDB" id="EMD-45376"/>
<dbReference type="EMDB" id="EMD-45378"/>
<dbReference type="EMDB" id="EMD-45379"/>
<dbReference type="EMDB" id="EMD-45380"/>
<dbReference type="EMDB" id="EMD-45390"/>
<dbReference type="EMDB" id="EMD-45391"/>
<dbReference type="EMDB" id="EMD-45393"/>
<dbReference type="EMDB" id="EMD-45394"/>
<dbReference type="EMDB" id="EMD-45395"/>
<dbReference type="SMR" id="Q9H7E2"/>
<dbReference type="BioGRID" id="123514">
    <property type="interactions" value="222"/>
</dbReference>
<dbReference type="ComplexPortal" id="CPX-1621">
    <molecule id="Q9H7E2-3"/>
    <property type="entry name" value="TDRD3-TOP3B type IA topoisomerase complex"/>
</dbReference>
<dbReference type="CORUM" id="Q9H7E2"/>
<dbReference type="DIP" id="DIP-61935N"/>
<dbReference type="FunCoup" id="Q9H7E2">
    <property type="interactions" value="3973"/>
</dbReference>
<dbReference type="IntAct" id="Q9H7E2">
    <property type="interactions" value="41"/>
</dbReference>
<dbReference type="MINT" id="Q9H7E2"/>
<dbReference type="STRING" id="9606.ENSP00000440190"/>
<dbReference type="ChEMBL" id="CHEMBL3879852"/>
<dbReference type="GlyGen" id="Q9H7E2">
    <property type="glycosylation" value="2 sites, 1 O-linked glycan (2 sites)"/>
</dbReference>
<dbReference type="iPTMnet" id="Q9H7E2"/>
<dbReference type="MetOSite" id="Q9H7E2"/>
<dbReference type="PhosphoSitePlus" id="Q9H7E2"/>
<dbReference type="BioMuta" id="TDRD3"/>
<dbReference type="DMDM" id="29337133"/>
<dbReference type="jPOST" id="Q9H7E2"/>
<dbReference type="MassIVE" id="Q9H7E2"/>
<dbReference type="PaxDb" id="9606-ENSP00000440190"/>
<dbReference type="PeptideAtlas" id="Q9H7E2"/>
<dbReference type="ProteomicsDB" id="81113">
    <molecule id="Q9H7E2-1"/>
</dbReference>
<dbReference type="ProteomicsDB" id="81114">
    <molecule id="Q9H7E2-2"/>
</dbReference>
<dbReference type="ProteomicsDB" id="81115">
    <molecule id="Q9H7E2-3"/>
</dbReference>
<dbReference type="Pumba" id="Q9H7E2"/>
<dbReference type="ABCD" id="Q9H7E2">
    <property type="antibodies" value="3 sequenced antibodies"/>
</dbReference>
<dbReference type="Antibodypedia" id="24335">
    <property type="antibodies" value="156 antibodies from 23 providers"/>
</dbReference>
<dbReference type="DNASU" id="81550"/>
<dbReference type="Ensembl" id="ENST00000196169.7">
    <molecule id="Q9H7E2-1"/>
    <property type="protein sequence ID" value="ENSP00000196169.3"/>
    <property type="gene ID" value="ENSG00000083544.16"/>
</dbReference>
<dbReference type="Ensembl" id="ENST00000377881.8">
    <molecule id="Q9H7E2-3"/>
    <property type="protein sequence ID" value="ENSP00000367113.2"/>
    <property type="gene ID" value="ENSG00000083544.16"/>
</dbReference>
<dbReference type="Ensembl" id="ENST00000377894.6">
    <molecule id="Q9H7E2-1"/>
    <property type="protein sequence ID" value="ENSP00000367126.2"/>
    <property type="gene ID" value="ENSG00000083544.16"/>
</dbReference>
<dbReference type="Ensembl" id="ENST00000621840.4">
    <molecule id="Q9H7E2-2"/>
    <property type="protein sequence ID" value="ENSP00000477993.1"/>
    <property type="gene ID" value="ENSG00000083544.16"/>
</dbReference>
<dbReference type="Ensembl" id="ENST00000648252.1">
    <molecule id="Q9H7E2-1"/>
    <property type="protein sequence ID" value="ENSP00000498191.1"/>
    <property type="gene ID" value="ENSG00000083544.16"/>
</dbReference>
<dbReference type="GeneID" id="81550"/>
<dbReference type="KEGG" id="hsa:81550"/>
<dbReference type="MANE-Select" id="ENST00000377881.8">
    <molecule id="Q9H7E2-3"/>
    <property type="protein sequence ID" value="ENSP00000367113.2"/>
    <property type="RefSeq nucleotide sequence ID" value="NM_001146070.2"/>
    <property type="RefSeq protein sequence ID" value="NP_001139542.1"/>
</dbReference>
<dbReference type="UCSC" id="uc001vhz.5">
    <molecule id="Q9H7E2-1"/>
    <property type="organism name" value="human"/>
</dbReference>
<dbReference type="AGR" id="HGNC:20612"/>
<dbReference type="CTD" id="81550"/>
<dbReference type="DisGeNET" id="81550"/>
<dbReference type="GeneCards" id="TDRD3"/>
<dbReference type="HGNC" id="HGNC:20612">
    <property type="gene designation" value="TDRD3"/>
</dbReference>
<dbReference type="HPA" id="ENSG00000083544">
    <property type="expression patterns" value="Low tissue specificity"/>
</dbReference>
<dbReference type="MIM" id="614392">
    <property type="type" value="gene"/>
</dbReference>
<dbReference type="neXtProt" id="NX_Q9H7E2"/>
<dbReference type="OpenTargets" id="ENSG00000083544"/>
<dbReference type="PharmGKB" id="PA134962690"/>
<dbReference type="VEuPathDB" id="HostDB:ENSG00000083544"/>
<dbReference type="eggNOG" id="KOG3683">
    <property type="taxonomic scope" value="Eukaryota"/>
</dbReference>
<dbReference type="GeneTree" id="ENSGT00940000155487"/>
<dbReference type="HOGENOM" id="CLU_022646_0_0_1"/>
<dbReference type="InParanoid" id="Q9H7E2"/>
<dbReference type="OMA" id="GGHDKPN"/>
<dbReference type="OrthoDB" id="434939at2759"/>
<dbReference type="PAN-GO" id="Q9H7E2">
    <property type="GO annotations" value="1 GO annotation based on evolutionary models"/>
</dbReference>
<dbReference type="PhylomeDB" id="Q9H7E2"/>
<dbReference type="TreeFam" id="TF316491"/>
<dbReference type="PathwayCommons" id="Q9H7E2"/>
<dbReference type="SignaLink" id="Q9H7E2"/>
<dbReference type="SIGNOR" id="Q9H7E2"/>
<dbReference type="BioGRID-ORCS" id="81550">
    <property type="hits" value="16 hits in 1164 CRISPR screens"/>
</dbReference>
<dbReference type="CD-CODE" id="232F8A39">
    <property type="entry name" value="P-body"/>
</dbReference>
<dbReference type="CD-CODE" id="DEE660B4">
    <property type="entry name" value="Stress granule"/>
</dbReference>
<dbReference type="ChiTaRS" id="TDRD3">
    <property type="organism name" value="human"/>
</dbReference>
<dbReference type="EvolutionaryTrace" id="Q9H7E2"/>
<dbReference type="GeneWiki" id="TDRD3"/>
<dbReference type="GenomeRNAi" id="81550"/>
<dbReference type="Pharos" id="Q9H7E2">
    <property type="development level" value="Tbio"/>
</dbReference>
<dbReference type="PRO" id="PR:Q9H7E2"/>
<dbReference type="Proteomes" id="UP000005640">
    <property type="component" value="Chromosome 13"/>
</dbReference>
<dbReference type="RNAct" id="Q9H7E2">
    <property type="molecule type" value="protein"/>
</dbReference>
<dbReference type="Bgee" id="ENSG00000083544">
    <property type="expression patterns" value="Expressed in calcaneal tendon and 196 other cell types or tissues"/>
</dbReference>
<dbReference type="ExpressionAtlas" id="Q9H7E2">
    <property type="expression patterns" value="baseline and differential"/>
</dbReference>
<dbReference type="GO" id="GO:0005829">
    <property type="term" value="C:cytosol"/>
    <property type="evidence" value="ECO:0000314"/>
    <property type="project" value="HPA"/>
</dbReference>
<dbReference type="GO" id="GO:0140225">
    <property type="term" value="C:DNA topoisomerase III-beta-TDRD3 complex"/>
    <property type="evidence" value="ECO:0000353"/>
    <property type="project" value="ComplexPortal"/>
</dbReference>
<dbReference type="GO" id="GO:0005794">
    <property type="term" value="C:Golgi apparatus"/>
    <property type="evidence" value="ECO:0000314"/>
    <property type="project" value="HPA"/>
</dbReference>
<dbReference type="GO" id="GO:0005654">
    <property type="term" value="C:nucleoplasm"/>
    <property type="evidence" value="ECO:0000314"/>
    <property type="project" value="HPA"/>
</dbReference>
<dbReference type="GO" id="GO:0005634">
    <property type="term" value="C:nucleus"/>
    <property type="evidence" value="ECO:0000314"/>
    <property type="project" value="ComplexPortal"/>
</dbReference>
<dbReference type="GO" id="GO:0003682">
    <property type="term" value="F:chromatin binding"/>
    <property type="evidence" value="ECO:0000314"/>
    <property type="project" value="UniProtKB"/>
</dbReference>
<dbReference type="GO" id="GO:0140006">
    <property type="term" value="F:histone H3 reader activity"/>
    <property type="evidence" value="ECO:0000314"/>
    <property type="project" value="UniProtKB"/>
</dbReference>
<dbReference type="GO" id="GO:0140008">
    <property type="term" value="F:histone H4 reader activity"/>
    <property type="evidence" value="ECO:0000314"/>
    <property type="project" value="UniProtKB"/>
</dbReference>
<dbReference type="GO" id="GO:0003723">
    <property type="term" value="F:RNA binding"/>
    <property type="evidence" value="ECO:0007005"/>
    <property type="project" value="UniProtKB"/>
</dbReference>
<dbReference type="GO" id="GO:0003713">
    <property type="term" value="F:transcription coactivator activity"/>
    <property type="evidence" value="ECO:0000314"/>
    <property type="project" value="UniProtKB"/>
</dbReference>
<dbReference type="GO" id="GO:0006265">
    <property type="term" value="P:DNA topological change"/>
    <property type="evidence" value="ECO:0000303"/>
    <property type="project" value="ComplexPortal"/>
</dbReference>
<dbReference type="CDD" id="cd20413">
    <property type="entry name" value="Tudor_TDRD3"/>
    <property type="match status" value="1"/>
</dbReference>
<dbReference type="CDD" id="cd14282">
    <property type="entry name" value="UBA_TDRD3"/>
    <property type="match status" value="1"/>
</dbReference>
<dbReference type="FunFam" id="1.10.8.10:FF:000038">
    <property type="entry name" value="tudor domain-containing protein 3 isoform X1"/>
    <property type="match status" value="1"/>
</dbReference>
<dbReference type="FunFam" id="2.30.30.140:FF:000046">
    <property type="entry name" value="tudor domain-containing protein 3 isoform X1"/>
    <property type="match status" value="1"/>
</dbReference>
<dbReference type="FunFam" id="2.40.50.770:FF:000003">
    <property type="entry name" value="tudor domain-containing protein 3 isoform X2"/>
    <property type="match status" value="1"/>
</dbReference>
<dbReference type="Gene3D" id="2.30.30.140">
    <property type="match status" value="1"/>
</dbReference>
<dbReference type="Gene3D" id="1.10.8.10">
    <property type="entry name" value="DNA helicase RuvA subunit, C-terminal domain"/>
    <property type="match status" value="1"/>
</dbReference>
<dbReference type="Gene3D" id="2.40.50.770">
    <property type="entry name" value="RecQ-mediated genome instability protein Rmi1, C-terminal domain"/>
    <property type="match status" value="1"/>
</dbReference>
<dbReference type="IDEAL" id="IID00499"/>
<dbReference type="InterPro" id="IPR042470">
    <property type="entry name" value="RMI1_N_C_sf"/>
</dbReference>
<dbReference type="InterPro" id="IPR013894">
    <property type="entry name" value="RMI1_OB"/>
</dbReference>
<dbReference type="InterPro" id="IPR002999">
    <property type="entry name" value="Tudor"/>
</dbReference>
<dbReference type="InterPro" id="IPR047379">
    <property type="entry name" value="Tudor_TDRD3"/>
</dbReference>
<dbReference type="InterPro" id="IPR015940">
    <property type="entry name" value="UBA"/>
</dbReference>
<dbReference type="InterPro" id="IPR009060">
    <property type="entry name" value="UBA-like_sf"/>
</dbReference>
<dbReference type="InterPro" id="IPR041915">
    <property type="entry name" value="UBA_TDRD3"/>
</dbReference>
<dbReference type="PANTHER" id="PTHR13681">
    <property type="entry name" value="SURVIVAL OF MOTOR NEURON-RELATED-SPLICING FACTOR 30-RELATED"/>
    <property type="match status" value="1"/>
</dbReference>
<dbReference type="PANTHER" id="PTHR13681:SF24">
    <property type="entry name" value="TUDOR DOMAIN-CONTAINING PROTEIN 3"/>
    <property type="match status" value="1"/>
</dbReference>
<dbReference type="Pfam" id="PF08585">
    <property type="entry name" value="RMI1_N_C"/>
    <property type="match status" value="1"/>
</dbReference>
<dbReference type="Pfam" id="PF00567">
    <property type="entry name" value="TUDOR"/>
    <property type="match status" value="1"/>
</dbReference>
<dbReference type="Pfam" id="PF22562">
    <property type="entry name" value="UBA_7"/>
    <property type="match status" value="1"/>
</dbReference>
<dbReference type="SMART" id="SM00333">
    <property type="entry name" value="TUDOR"/>
    <property type="match status" value="1"/>
</dbReference>
<dbReference type="SMART" id="SM00165">
    <property type="entry name" value="UBA"/>
    <property type="match status" value="1"/>
</dbReference>
<dbReference type="SUPFAM" id="SSF63748">
    <property type="entry name" value="Tudor/PWWP/MBT"/>
    <property type="match status" value="1"/>
</dbReference>
<dbReference type="SUPFAM" id="SSF46934">
    <property type="entry name" value="UBA-like"/>
    <property type="match status" value="1"/>
</dbReference>
<dbReference type="PROSITE" id="PS50304">
    <property type="entry name" value="TUDOR"/>
    <property type="match status" value="1"/>
</dbReference>
<dbReference type="PROSITE" id="PS50030">
    <property type="entry name" value="UBA"/>
    <property type="match status" value="1"/>
</dbReference>
<feature type="chain" id="PRO_0000183163" description="Tudor domain-containing protein 3">
    <location>
        <begin position="1"/>
        <end position="651"/>
    </location>
</feature>
<feature type="domain" description="UBA" evidence="2">
    <location>
        <begin position="193"/>
        <end position="233"/>
    </location>
</feature>
<feature type="domain" description="Tudor" evidence="1">
    <location>
        <begin position="555"/>
        <end position="615"/>
    </location>
</feature>
<feature type="region of interest" description="Disordered" evidence="3">
    <location>
        <begin position="234"/>
        <end position="271"/>
    </location>
</feature>
<feature type="region of interest" description="Disordered" evidence="3">
    <location>
        <begin position="287"/>
        <end position="369"/>
    </location>
</feature>
<feature type="region of interest" description="Disordered" evidence="3">
    <location>
        <begin position="381"/>
        <end position="450"/>
    </location>
</feature>
<feature type="region of interest" description="Disordered" evidence="3">
    <location>
        <begin position="624"/>
        <end position="651"/>
    </location>
</feature>
<feature type="region of interest" description="EBM motif; may mediate interaction with the EJC">
    <location>
        <begin position="631"/>
        <end position="651"/>
    </location>
</feature>
<feature type="compositionally biased region" description="Polar residues" evidence="3">
    <location>
        <begin position="291"/>
        <end position="312"/>
    </location>
</feature>
<feature type="compositionally biased region" description="Basic and acidic residues" evidence="3">
    <location>
        <begin position="313"/>
        <end position="338"/>
    </location>
</feature>
<feature type="compositionally biased region" description="Basic and acidic residues" evidence="3">
    <location>
        <begin position="624"/>
        <end position="633"/>
    </location>
</feature>
<feature type="modified residue" description="Phosphoserine" evidence="14 15">
    <location>
        <position position="256"/>
    </location>
</feature>
<feature type="modified residue" description="Phosphoserine" evidence="16">
    <location>
        <position position="345"/>
    </location>
</feature>
<feature type="cross-link" description="Glycyl lysine isopeptide (Lys-Gly) (interchain with G-Cter in SUMO2)" evidence="17">
    <location>
        <position position="470"/>
    </location>
</feature>
<feature type="splice variant" id="VSP_037052" description="In isoform 3." evidence="12">
    <original>M</original>
    <variation>MAQVAGAALSQAGWYLSDEGIEACTSSPDKVNVNDIILIALNTDLRTIGKKFLPSDINSGKVEKLEGPCVLQIQKIRNVAAPKDNEESQAAPRM</variation>
    <location>
        <position position="1"/>
    </location>
</feature>
<feature type="splice variant" id="VSP_037053" description="In isoform 2." evidence="11">
    <location>
        <position position="97"/>
    </location>
</feature>
<feature type="mutagenesis site" description="Abolishes interaction with dimethylarginine-containing protein motifs and reduces association with mRNA stress granules." evidence="5">
    <original>E</original>
    <variation>K</variation>
    <location>
        <position position="598"/>
    </location>
</feature>
<feature type="mutagenesis site" description="Loss of interaction with the EJC." evidence="7">
    <original>RPTQQFY</original>
    <variation>EPTQQFE</variation>
    <location>
        <begin position="638"/>
        <end position="644"/>
    </location>
</feature>
<feature type="sequence conflict" description="In Ref. 6; AAH60876." evidence="13" ref="6">
    <original>H</original>
    <variation>R</variation>
    <location>
        <position position="101"/>
    </location>
</feature>
<feature type="sequence conflict" description="In Ref. 6; AAH60876." evidence="13" ref="6">
    <original>P</original>
    <variation>H</variation>
    <location>
        <position position="509"/>
    </location>
</feature>
<feature type="strand" evidence="20">
    <location>
        <begin position="1"/>
        <end position="21"/>
    </location>
</feature>
<feature type="strand" evidence="22">
    <location>
        <begin position="22"/>
        <end position="24"/>
    </location>
</feature>
<feature type="strand" evidence="20">
    <location>
        <begin position="33"/>
        <end position="36"/>
    </location>
</feature>
<feature type="strand" evidence="20">
    <location>
        <begin position="38"/>
        <end position="43"/>
    </location>
</feature>
<feature type="strand" evidence="20">
    <location>
        <begin position="46"/>
        <end position="50"/>
    </location>
</feature>
<feature type="turn" evidence="20">
    <location>
        <begin position="51"/>
        <end position="53"/>
    </location>
</feature>
<feature type="strand" evidence="20">
    <location>
        <begin position="54"/>
        <end position="58"/>
    </location>
</feature>
<feature type="helix" evidence="23">
    <location>
        <begin position="65"/>
        <end position="67"/>
    </location>
</feature>
<feature type="helix" evidence="18">
    <location>
        <begin position="196"/>
        <end position="203"/>
    </location>
</feature>
<feature type="turn" evidence="18">
    <location>
        <begin position="204"/>
        <end position="206"/>
    </location>
</feature>
<feature type="helix" evidence="18">
    <location>
        <begin position="209"/>
        <end position="218"/>
    </location>
</feature>
<feature type="helix" evidence="18">
    <location>
        <begin position="223"/>
        <end position="233"/>
    </location>
</feature>
<feature type="helix" evidence="19">
    <location>
        <begin position="550"/>
        <end position="553"/>
    </location>
</feature>
<feature type="strand" evidence="21">
    <location>
        <begin position="561"/>
        <end position="565"/>
    </location>
</feature>
<feature type="turn" evidence="21">
    <location>
        <begin position="567"/>
        <end position="569"/>
    </location>
</feature>
<feature type="strand" evidence="21">
    <location>
        <begin position="572"/>
        <end position="581"/>
    </location>
</feature>
<feature type="turn" evidence="21">
    <location>
        <begin position="582"/>
        <end position="585"/>
    </location>
</feature>
<feature type="strand" evidence="21">
    <location>
        <begin position="586"/>
        <end position="591"/>
    </location>
</feature>
<feature type="turn" evidence="21">
    <location>
        <begin position="592"/>
        <end position="594"/>
    </location>
</feature>
<feature type="strand" evidence="21">
    <location>
        <begin position="597"/>
        <end position="601"/>
    </location>
</feature>
<feature type="helix" evidence="21">
    <location>
        <begin position="602"/>
        <end position="604"/>
    </location>
</feature>
<feature type="strand" evidence="21">
    <location>
        <begin position="605"/>
        <end position="607"/>
    </location>
</feature>
<protein>
    <recommendedName>
        <fullName>Tudor domain-containing protein 3</fullName>
    </recommendedName>
</protein>
<sequence>MLRLQMTDGHISCTAVEFSYMSKISLNTPPGTKVKLSGIVDIKNGFLLLNDSNTTVLGGEVEHLIEKWELQRSLSKHNRSNIGTEGGPPPFVPFGQKCVSHVQVDSRELDRRKTLQVTMPVKPTNDNDEFEKQRTAAIAEVAKSKETKTFGGGGGGARSNLNMNAAGNRNREVLQKEKSTKSEGKHEGVYRELVDEKALKHITEMGFSKEASRQALMDNGNNLEAALNVLLTSNKQKPVMGPPLRGRGKGRGRIRSEDEEDLGNARPSAPSTLFDFLESKMGTLNVEEPKSQPQQLHQGQYRSSNTEQNGVKDNNHLRHPPRNDTRQPRNEKPPRFQRDSQNSKSVLEGSGLPRNRGSERPSTSSVSEVWAEDRIKCDRPYSRYDRTKDTSYPLGSQHSDGAFKKRDNSMQSRSGKGPSFAEAKENPLPQGSVDYNNQKRGKRESQTSIPDYFYDRKSQTINNEAFSGIKIEKHFNVNTDYQNPVRSNSFIGVPNGEVEMPLKGRRIGPIKPAGPVTAVPCDDKIFYNSGPKRRSGPIKPEKILESSIPMEYAKMWKPGDECFALYWEDNKFYRAEVEALHSSGMTAVVKFIDYGNYEEVLLSNIKPIQTEAWEEEGTYDQTLEFRRGGDGQPRRSTRPTQQFYQPPRARN</sequence>
<accession>Q9H7E2</accession>
<accession>B2MWP9</accession>
<accession>Q53XA6</accession>
<accession>Q6P992</accession>
<reference key="1">
    <citation type="journal article" date="2008" name="Hum. Mol. Genet.">
        <title>TDRD3, a novel Tudor domain-containing protein, localizes to cytoplasmic stress granules.</title>
        <authorList>
            <person name="Goulet I."/>
            <person name="Boisvenue S."/>
            <person name="Mokas S."/>
            <person name="Mazroui R."/>
            <person name="Cote J."/>
        </authorList>
    </citation>
    <scope>NUCLEOTIDE SEQUENCE [MRNA] (ISOFORM 3)</scope>
    <scope>ALTERNATIVE SPLICING</scope>
    <scope>FUNCTION</scope>
    <scope>SUBCELLULAR LOCATION</scope>
    <scope>MUTAGENESIS OF GLU-598</scope>
    <scope>INTERACTION WITH EWSR1; FMR1; FUS; SERBP1; EEF1A1 AND DDX3X OR DDX3Y</scope>
</reference>
<reference key="2">
    <citation type="journal article" date="2004" name="Nat. Genet.">
        <title>Complete sequencing and characterization of 21,243 full-length human cDNAs.</title>
        <authorList>
            <person name="Ota T."/>
            <person name="Suzuki Y."/>
            <person name="Nishikawa T."/>
            <person name="Otsuki T."/>
            <person name="Sugiyama T."/>
            <person name="Irie R."/>
            <person name="Wakamatsu A."/>
            <person name="Hayashi K."/>
            <person name="Sato H."/>
            <person name="Nagai K."/>
            <person name="Kimura K."/>
            <person name="Makita H."/>
            <person name="Sekine M."/>
            <person name="Obayashi M."/>
            <person name="Nishi T."/>
            <person name="Shibahara T."/>
            <person name="Tanaka T."/>
            <person name="Ishii S."/>
            <person name="Yamamoto J."/>
            <person name="Saito K."/>
            <person name="Kawai Y."/>
            <person name="Isono Y."/>
            <person name="Nakamura Y."/>
            <person name="Nagahari K."/>
            <person name="Murakami K."/>
            <person name="Yasuda T."/>
            <person name="Iwayanagi T."/>
            <person name="Wagatsuma M."/>
            <person name="Shiratori A."/>
            <person name="Sudo H."/>
            <person name="Hosoiri T."/>
            <person name="Kaku Y."/>
            <person name="Kodaira H."/>
            <person name="Kondo H."/>
            <person name="Sugawara M."/>
            <person name="Takahashi M."/>
            <person name="Kanda K."/>
            <person name="Yokoi T."/>
            <person name="Furuya T."/>
            <person name="Kikkawa E."/>
            <person name="Omura Y."/>
            <person name="Abe K."/>
            <person name="Kamihara K."/>
            <person name="Katsuta N."/>
            <person name="Sato K."/>
            <person name="Tanikawa M."/>
            <person name="Yamazaki M."/>
            <person name="Ninomiya K."/>
            <person name="Ishibashi T."/>
            <person name="Yamashita H."/>
            <person name="Murakawa K."/>
            <person name="Fujimori K."/>
            <person name="Tanai H."/>
            <person name="Kimata M."/>
            <person name="Watanabe M."/>
            <person name="Hiraoka S."/>
            <person name="Chiba Y."/>
            <person name="Ishida S."/>
            <person name="Ono Y."/>
            <person name="Takiguchi S."/>
            <person name="Watanabe S."/>
            <person name="Yosida M."/>
            <person name="Hotuta T."/>
            <person name="Kusano J."/>
            <person name="Kanehori K."/>
            <person name="Takahashi-Fujii A."/>
            <person name="Hara H."/>
            <person name="Tanase T.-O."/>
            <person name="Nomura Y."/>
            <person name="Togiya S."/>
            <person name="Komai F."/>
            <person name="Hara R."/>
            <person name="Takeuchi K."/>
            <person name="Arita M."/>
            <person name="Imose N."/>
            <person name="Musashino K."/>
            <person name="Yuuki H."/>
            <person name="Oshima A."/>
            <person name="Sasaki N."/>
            <person name="Aotsuka S."/>
            <person name="Yoshikawa Y."/>
            <person name="Matsunawa H."/>
            <person name="Ichihara T."/>
            <person name="Shiohata N."/>
            <person name="Sano S."/>
            <person name="Moriya S."/>
            <person name="Momiyama H."/>
            <person name="Satoh N."/>
            <person name="Takami S."/>
            <person name="Terashima Y."/>
            <person name="Suzuki O."/>
            <person name="Nakagawa S."/>
            <person name="Senoh A."/>
            <person name="Mizoguchi H."/>
            <person name="Goto Y."/>
            <person name="Shimizu F."/>
            <person name="Wakebe H."/>
            <person name="Hishigaki H."/>
            <person name="Watanabe T."/>
            <person name="Sugiyama A."/>
            <person name="Takemoto M."/>
            <person name="Kawakami B."/>
            <person name="Yamazaki M."/>
            <person name="Watanabe K."/>
            <person name="Kumagai A."/>
            <person name="Itakura S."/>
            <person name="Fukuzumi Y."/>
            <person name="Fujimori Y."/>
            <person name="Komiyama M."/>
            <person name="Tashiro H."/>
            <person name="Tanigami A."/>
            <person name="Fujiwara T."/>
            <person name="Ono T."/>
            <person name="Yamada K."/>
            <person name="Fujii Y."/>
            <person name="Ozaki K."/>
            <person name="Hirao M."/>
            <person name="Ohmori Y."/>
            <person name="Kawabata A."/>
            <person name="Hikiji T."/>
            <person name="Kobatake N."/>
            <person name="Inagaki H."/>
            <person name="Ikema Y."/>
            <person name="Okamoto S."/>
            <person name="Okitani R."/>
            <person name="Kawakami T."/>
            <person name="Noguchi S."/>
            <person name="Itoh T."/>
            <person name="Shigeta K."/>
            <person name="Senba T."/>
            <person name="Matsumura K."/>
            <person name="Nakajima Y."/>
            <person name="Mizuno T."/>
            <person name="Morinaga M."/>
            <person name="Sasaki M."/>
            <person name="Togashi T."/>
            <person name="Oyama M."/>
            <person name="Hata H."/>
            <person name="Watanabe M."/>
            <person name="Komatsu T."/>
            <person name="Mizushima-Sugano J."/>
            <person name="Satoh T."/>
            <person name="Shirai Y."/>
            <person name="Takahashi Y."/>
            <person name="Nakagawa K."/>
            <person name="Okumura K."/>
            <person name="Nagase T."/>
            <person name="Nomura N."/>
            <person name="Kikuchi H."/>
            <person name="Masuho Y."/>
            <person name="Yamashita R."/>
            <person name="Nakai K."/>
            <person name="Yada T."/>
            <person name="Nakamura Y."/>
            <person name="Ohara O."/>
            <person name="Isogai T."/>
            <person name="Sugano S."/>
        </authorList>
    </citation>
    <scope>NUCLEOTIDE SEQUENCE [LARGE SCALE MRNA] (ISOFORM 1)</scope>
</reference>
<reference key="3">
    <citation type="journal article" date="2007" name="BMC Genomics">
        <title>The full-ORF clone resource of the German cDNA consortium.</title>
        <authorList>
            <person name="Bechtel S."/>
            <person name="Rosenfelder H."/>
            <person name="Duda A."/>
            <person name="Schmidt C.P."/>
            <person name="Ernst U."/>
            <person name="Wellenreuther R."/>
            <person name="Mehrle A."/>
            <person name="Schuster C."/>
            <person name="Bahr A."/>
            <person name="Bloecker H."/>
            <person name="Heubner D."/>
            <person name="Hoerlein A."/>
            <person name="Michel G."/>
            <person name="Wedler H."/>
            <person name="Koehrer K."/>
            <person name="Ottenwaelder B."/>
            <person name="Poustka A."/>
            <person name="Wiemann S."/>
            <person name="Schupp I."/>
        </authorList>
    </citation>
    <scope>NUCLEOTIDE SEQUENCE [LARGE SCALE MRNA] (ISOFORM 1)</scope>
    <source>
        <tissue>Fetal kidney</tissue>
    </source>
</reference>
<reference key="4">
    <citation type="journal article" date="2004" name="Nature">
        <title>The DNA sequence and analysis of human chromosome 13.</title>
        <authorList>
            <person name="Dunham A."/>
            <person name="Matthews L.H."/>
            <person name="Burton J."/>
            <person name="Ashurst J.L."/>
            <person name="Howe K.L."/>
            <person name="Ashcroft K.J."/>
            <person name="Beare D.M."/>
            <person name="Burford D.C."/>
            <person name="Hunt S.E."/>
            <person name="Griffiths-Jones S."/>
            <person name="Jones M.C."/>
            <person name="Keenan S.J."/>
            <person name="Oliver K."/>
            <person name="Scott C.E."/>
            <person name="Ainscough R."/>
            <person name="Almeida J.P."/>
            <person name="Ambrose K.D."/>
            <person name="Andrews D.T."/>
            <person name="Ashwell R.I.S."/>
            <person name="Babbage A.K."/>
            <person name="Bagguley C.L."/>
            <person name="Bailey J."/>
            <person name="Bannerjee R."/>
            <person name="Barlow K.F."/>
            <person name="Bates K."/>
            <person name="Beasley H."/>
            <person name="Bird C.P."/>
            <person name="Bray-Allen S."/>
            <person name="Brown A.J."/>
            <person name="Brown J.Y."/>
            <person name="Burrill W."/>
            <person name="Carder C."/>
            <person name="Carter N.P."/>
            <person name="Chapman J.C."/>
            <person name="Clamp M.E."/>
            <person name="Clark S.Y."/>
            <person name="Clarke G."/>
            <person name="Clee C.M."/>
            <person name="Clegg S.C."/>
            <person name="Cobley V."/>
            <person name="Collins J.E."/>
            <person name="Corby N."/>
            <person name="Coville G.J."/>
            <person name="Deloukas P."/>
            <person name="Dhami P."/>
            <person name="Dunham I."/>
            <person name="Dunn M."/>
            <person name="Earthrowl M.E."/>
            <person name="Ellington A.G."/>
            <person name="Faulkner L."/>
            <person name="Frankish A.G."/>
            <person name="Frankland J."/>
            <person name="French L."/>
            <person name="Garner P."/>
            <person name="Garnett J."/>
            <person name="Gilbert J.G.R."/>
            <person name="Gilson C.J."/>
            <person name="Ghori J."/>
            <person name="Grafham D.V."/>
            <person name="Gribble S.M."/>
            <person name="Griffiths C."/>
            <person name="Hall R.E."/>
            <person name="Hammond S."/>
            <person name="Harley J.L."/>
            <person name="Hart E.A."/>
            <person name="Heath P.D."/>
            <person name="Howden P.J."/>
            <person name="Huckle E.J."/>
            <person name="Hunt P.J."/>
            <person name="Hunt A.R."/>
            <person name="Johnson C."/>
            <person name="Johnson D."/>
            <person name="Kay M."/>
            <person name="Kimberley A.M."/>
            <person name="King A."/>
            <person name="Laird G.K."/>
            <person name="Langford C.J."/>
            <person name="Lawlor S."/>
            <person name="Leongamornlert D.A."/>
            <person name="Lloyd D.M."/>
            <person name="Lloyd C."/>
            <person name="Loveland J.E."/>
            <person name="Lovell J."/>
            <person name="Martin S."/>
            <person name="Mashreghi-Mohammadi M."/>
            <person name="McLaren S.J."/>
            <person name="McMurray A."/>
            <person name="Milne S."/>
            <person name="Moore M.J.F."/>
            <person name="Nickerson T."/>
            <person name="Palmer S.A."/>
            <person name="Pearce A.V."/>
            <person name="Peck A.I."/>
            <person name="Pelan S."/>
            <person name="Phillimore B."/>
            <person name="Porter K.M."/>
            <person name="Rice C.M."/>
            <person name="Searle S."/>
            <person name="Sehra H.K."/>
            <person name="Shownkeen R."/>
            <person name="Skuce C.D."/>
            <person name="Smith M."/>
            <person name="Steward C.A."/>
            <person name="Sycamore N."/>
            <person name="Tester J."/>
            <person name="Thomas D.W."/>
            <person name="Tracey A."/>
            <person name="Tromans A."/>
            <person name="Tubby B."/>
            <person name="Wall M."/>
            <person name="Wallis J.M."/>
            <person name="West A.P."/>
            <person name="Whitehead S.L."/>
            <person name="Willey D.L."/>
            <person name="Wilming L."/>
            <person name="Wray P.W."/>
            <person name="Wright M.W."/>
            <person name="Young L."/>
            <person name="Coulson A."/>
            <person name="Durbin R.M."/>
            <person name="Hubbard T."/>
            <person name="Sulston J.E."/>
            <person name="Beck S."/>
            <person name="Bentley D.R."/>
            <person name="Rogers J."/>
            <person name="Ross M.T."/>
        </authorList>
    </citation>
    <scope>NUCLEOTIDE SEQUENCE [LARGE SCALE GENOMIC DNA]</scope>
</reference>
<reference key="5">
    <citation type="submission" date="2005-07" db="EMBL/GenBank/DDBJ databases">
        <authorList>
            <person name="Mural R.J."/>
            <person name="Istrail S."/>
            <person name="Sutton G.G."/>
            <person name="Florea L."/>
            <person name="Halpern A.L."/>
            <person name="Mobarry C.M."/>
            <person name="Lippert R."/>
            <person name="Walenz B."/>
            <person name="Shatkay H."/>
            <person name="Dew I."/>
            <person name="Miller J.R."/>
            <person name="Flanigan M.J."/>
            <person name="Edwards N.J."/>
            <person name="Bolanos R."/>
            <person name="Fasulo D."/>
            <person name="Halldorsson B.V."/>
            <person name="Hannenhalli S."/>
            <person name="Turner R."/>
            <person name="Yooseph S."/>
            <person name="Lu F."/>
            <person name="Nusskern D.R."/>
            <person name="Shue B.C."/>
            <person name="Zheng X.H."/>
            <person name="Zhong F."/>
            <person name="Delcher A.L."/>
            <person name="Huson D.H."/>
            <person name="Kravitz S.A."/>
            <person name="Mouchard L."/>
            <person name="Reinert K."/>
            <person name="Remington K.A."/>
            <person name="Clark A.G."/>
            <person name="Waterman M.S."/>
            <person name="Eichler E.E."/>
            <person name="Adams M.D."/>
            <person name="Hunkapiller M.W."/>
            <person name="Myers E.W."/>
            <person name="Venter J.C."/>
        </authorList>
    </citation>
    <scope>NUCLEOTIDE SEQUENCE [LARGE SCALE GENOMIC DNA]</scope>
</reference>
<reference key="6">
    <citation type="journal article" date="2004" name="Genome Res.">
        <title>The status, quality, and expansion of the NIH full-length cDNA project: the Mammalian Gene Collection (MGC).</title>
        <authorList>
            <consortium name="The MGC Project Team"/>
        </authorList>
    </citation>
    <scope>NUCLEOTIDE SEQUENCE [LARGE SCALE MRNA] (ISOFORMS 1 AND 2)</scope>
    <source>
        <tissue>Placenta</tissue>
        <tissue>Testis</tissue>
    </source>
</reference>
<reference key="7">
    <citation type="journal article" date="2005" name="J. Biol. Chem.">
        <title>Tudor domains bind symmetrical dimethylated arginines.</title>
        <authorList>
            <person name="Cote J."/>
            <person name="Richard S."/>
        </authorList>
    </citation>
    <scope>FUNCTION</scope>
    <scope>INTERACTION WITH SNRPB AND SNRPN</scope>
</reference>
<reference key="8">
    <citation type="journal article" date="2008" name="Hum. Mol. Genet.">
        <title>Tdrd3 is a novel stress granule-associated protein interacting with the Fragile-X syndrome protein FMRP.</title>
        <authorList>
            <person name="Linder B."/>
            <person name="Ploettner O."/>
            <person name="Kroiss M."/>
            <person name="Hartmann E."/>
            <person name="Laggerbauer B."/>
            <person name="Meister G."/>
            <person name="Keidel E."/>
            <person name="Fischer U."/>
        </authorList>
    </citation>
    <scope>INTERACTION WITH LYS-48-LINKED TETRA-UBIQUITIN; FMR1; FXR1 AND FXR2</scope>
    <scope>SUBCELLULAR LOCATION</scope>
    <scope>TISSUE SPECIFICITY</scope>
</reference>
<reference key="9">
    <citation type="journal article" date="2008" name="Proc. Natl. Acad. Sci. U.S.A.">
        <title>A quantitative atlas of mitotic phosphorylation.</title>
        <authorList>
            <person name="Dephoure N."/>
            <person name="Zhou C."/>
            <person name="Villen J."/>
            <person name="Beausoleil S.A."/>
            <person name="Bakalarski C.E."/>
            <person name="Elledge S.J."/>
            <person name="Gygi S.P."/>
        </authorList>
    </citation>
    <scope>PHOSPHORYLATION [LARGE SCALE ANALYSIS] AT SER-256</scope>
    <scope>IDENTIFICATION BY MASS SPECTROMETRY [LARGE SCALE ANALYSIS]</scope>
    <source>
        <tissue>Cervix carcinoma</tissue>
    </source>
</reference>
<reference key="10">
    <citation type="journal article" date="2009" name="Sci. Signal.">
        <title>Quantitative phosphoproteomic analysis of T cell receptor signaling reveals system-wide modulation of protein-protein interactions.</title>
        <authorList>
            <person name="Mayya V."/>
            <person name="Lundgren D.H."/>
            <person name="Hwang S.-I."/>
            <person name="Rezaul K."/>
            <person name="Wu L."/>
            <person name="Eng J.K."/>
            <person name="Rodionov V."/>
            <person name="Han D.K."/>
        </authorList>
    </citation>
    <scope>PHOSPHORYLATION [LARGE SCALE ANALYSIS] AT SER-256</scope>
    <scope>IDENTIFICATION BY MASS SPECTROMETRY [LARGE SCALE ANALYSIS]</scope>
    <source>
        <tissue>Leukemic T-cell</tissue>
    </source>
</reference>
<reference key="11">
    <citation type="journal article" date="2010" name="Genes Dev.">
        <title>SMG6 interacts with the exon junction complex via two conserved EJC-binding motifs (EBMs) required for nonsense-mediated mRNA decay.</title>
        <authorList>
            <person name="Kashima I."/>
            <person name="Jonas S."/>
            <person name="Jayachandran U."/>
            <person name="Buchwald G."/>
            <person name="Conti E."/>
            <person name="Lupas A.N."/>
            <person name="Izaurralde E."/>
        </authorList>
    </citation>
    <scope>INTERACTION WITH THE EXON JUNCTION COMPLEX</scope>
    <scope>MUTAGENESIS OF 638-ARG--TYR-644</scope>
</reference>
<reference key="12">
    <citation type="journal article" date="2010" name="Mol. Cell">
        <title>TDRD3 is an effector molecule for arginine-methylated histone marks.</title>
        <authorList>
            <person name="Yang Y."/>
            <person name="Lu Y."/>
            <person name="Espejo A."/>
            <person name="Wu J."/>
            <person name="Xu W."/>
            <person name="Liang S."/>
            <person name="Bedford M.T."/>
        </authorList>
    </citation>
    <scope>FUNCTION</scope>
    <scope>SUBCELLULAR LOCATION</scope>
    <scope>DOMAIN TUDOR</scope>
</reference>
<reference key="13">
    <citation type="journal article" date="2013" name="J. Proteome Res.">
        <title>Toward a comprehensive characterization of a human cancer cell phosphoproteome.</title>
        <authorList>
            <person name="Zhou H."/>
            <person name="Di Palma S."/>
            <person name="Preisinger C."/>
            <person name="Peng M."/>
            <person name="Polat A.N."/>
            <person name="Heck A.J."/>
            <person name="Mohammed S."/>
        </authorList>
    </citation>
    <scope>PHOSPHORYLATION [LARGE SCALE ANALYSIS] AT SER-345</scope>
    <scope>IDENTIFICATION BY MASS SPECTROMETRY [LARGE SCALE ANALYSIS]</scope>
    <source>
        <tissue>Cervix carcinoma</tissue>
        <tissue>Erythroleukemia</tissue>
    </source>
</reference>
<reference key="14">
    <citation type="journal article" date="2016" name="Nature">
        <title>SMN and symmetric arginine dimethylation of RNA polymerase II C-terminal domain control termination.</title>
        <authorList>
            <person name="Yanling Zhao D."/>
            <person name="Gish G."/>
            <person name="Braunschweig U."/>
            <person name="Li Y."/>
            <person name="Ni Z."/>
            <person name="Schmitges F.W."/>
            <person name="Zhong G."/>
            <person name="Liu K."/>
            <person name="Li W."/>
            <person name="Moffat J."/>
            <person name="Vedadi M."/>
            <person name="Min J."/>
            <person name="Pawson T.J."/>
            <person name="Blencowe B.J."/>
            <person name="Greenblatt J.F."/>
        </authorList>
    </citation>
    <scope>INTERACTION WITH POLR2A</scope>
</reference>
<reference key="15">
    <citation type="journal article" date="2017" name="Nat. Struct. Mol. Biol.">
        <title>Site-specific mapping of the human SUMO proteome reveals co-modification with phosphorylation.</title>
        <authorList>
            <person name="Hendriks I.A."/>
            <person name="Lyon D."/>
            <person name="Young C."/>
            <person name="Jensen L.J."/>
            <person name="Vertegaal A.C."/>
            <person name="Nielsen M.L."/>
        </authorList>
    </citation>
    <scope>SUMOYLATION [LARGE SCALE ANALYSIS] AT LYS-470</scope>
    <scope>IDENTIFICATION BY MASS SPECTROMETRY [LARGE SCALE ANALYSIS]</scope>
</reference>
<reference key="16">
    <citation type="journal article" date="2022" name="PLoS Pathog.">
        <title>TDRD3 is an antiviral restriction factor that promotes IFN signaling with G3BP1.</title>
        <authorList>
            <person name="Deater M."/>
            <person name="Tamhankar M."/>
            <person name="Lloyd R.E."/>
        </authorList>
    </citation>
    <scope>SUBCELLULAR LOCATION</scope>
    <scope>PROTEOLYTIC CLEAVAGE BY ENTEROVIRAL 2A PROTEINASE</scope>
    <scope>FUNCTION</scope>
</reference>
<reference key="17">
    <citation type="submission" date="2004-11" db="PDB data bank">
        <title>Solution structure of the UBA domain of human Tudor domain containing protein 3.</title>
        <authorList>
            <consortium name="RIKEN structural genomics initiative (RSGI)"/>
        </authorList>
    </citation>
    <scope>STRUCTURE BY NMR OF 194-243</scope>
</reference>
<evidence type="ECO:0000255" key="1">
    <source>
        <dbReference type="PROSITE-ProRule" id="PRU00211"/>
    </source>
</evidence>
<evidence type="ECO:0000255" key="2">
    <source>
        <dbReference type="PROSITE-ProRule" id="PRU00212"/>
    </source>
</evidence>
<evidence type="ECO:0000256" key="3">
    <source>
        <dbReference type="SAM" id="MobiDB-lite"/>
    </source>
</evidence>
<evidence type="ECO:0000269" key="4">
    <source>
    </source>
</evidence>
<evidence type="ECO:0000269" key="5">
    <source>
    </source>
</evidence>
<evidence type="ECO:0000269" key="6">
    <source>
    </source>
</evidence>
<evidence type="ECO:0000269" key="7">
    <source>
    </source>
</evidence>
<evidence type="ECO:0000269" key="8">
    <source>
    </source>
</evidence>
<evidence type="ECO:0000269" key="9">
    <source>
    </source>
</evidence>
<evidence type="ECO:0000269" key="10">
    <source>
    </source>
</evidence>
<evidence type="ECO:0000303" key="11">
    <source>
    </source>
</evidence>
<evidence type="ECO:0000303" key="12">
    <source>
    </source>
</evidence>
<evidence type="ECO:0000305" key="13"/>
<evidence type="ECO:0007744" key="14">
    <source>
    </source>
</evidence>
<evidence type="ECO:0007744" key="15">
    <source>
    </source>
</evidence>
<evidence type="ECO:0007744" key="16">
    <source>
    </source>
</evidence>
<evidence type="ECO:0007744" key="17">
    <source>
    </source>
</evidence>
<evidence type="ECO:0007829" key="18">
    <source>
        <dbReference type="PDB" id="1WJI"/>
    </source>
</evidence>
<evidence type="ECO:0007829" key="19">
    <source>
        <dbReference type="PDB" id="3PNW"/>
    </source>
</evidence>
<evidence type="ECO:0007829" key="20">
    <source>
        <dbReference type="PDB" id="5GVD"/>
    </source>
</evidence>
<evidence type="ECO:0007829" key="21">
    <source>
        <dbReference type="PDB" id="5YJ8"/>
    </source>
</evidence>
<evidence type="ECO:0007829" key="22">
    <source>
        <dbReference type="PDB" id="9C9Y"/>
    </source>
</evidence>
<evidence type="ECO:0007829" key="23">
    <source>
        <dbReference type="PDB" id="9CA1"/>
    </source>
</evidence>
<proteinExistence type="evidence at protein level"/>
<name>TDRD3_HUMAN</name>
<keyword id="KW-0002">3D-structure</keyword>
<keyword id="KW-0025">Alternative splicing</keyword>
<keyword id="KW-0156">Chromatin regulator</keyword>
<keyword id="KW-0963">Cytoplasm</keyword>
<keyword id="KW-1017">Isopeptide bond</keyword>
<keyword id="KW-0539">Nucleus</keyword>
<keyword id="KW-0597">Phosphoprotein</keyword>
<keyword id="KW-1267">Proteomics identification</keyword>
<keyword id="KW-1185">Reference proteome</keyword>
<keyword id="KW-0832">Ubl conjugation</keyword>